<name>Y1043_BACC7</name>
<organism>
    <name type="scientific">Bacillus cereus (strain AH187)</name>
    <dbReference type="NCBI Taxonomy" id="405534"/>
    <lineage>
        <taxon>Bacteria</taxon>
        <taxon>Bacillati</taxon>
        <taxon>Bacillota</taxon>
        <taxon>Bacilli</taxon>
        <taxon>Bacillales</taxon>
        <taxon>Bacillaceae</taxon>
        <taxon>Bacillus</taxon>
        <taxon>Bacillus cereus group</taxon>
    </lineage>
</organism>
<comment type="similarity">
    <text evidence="1">Belongs to the UPF0342 family.</text>
</comment>
<reference key="1">
    <citation type="submission" date="2008-10" db="EMBL/GenBank/DDBJ databases">
        <title>Genome sequence of Bacillus cereus AH187.</title>
        <authorList>
            <person name="Dodson R.J."/>
            <person name="Durkin A.S."/>
            <person name="Rosovitz M.J."/>
            <person name="Rasko D.A."/>
            <person name="Kolsto A.B."/>
            <person name="Okstad O.A."/>
            <person name="Ravel J."/>
            <person name="Sutton G."/>
        </authorList>
    </citation>
    <scope>NUCLEOTIDE SEQUENCE [LARGE SCALE GENOMIC DNA]</scope>
    <source>
        <strain>AH187</strain>
    </source>
</reference>
<accession>B7HXM4</accession>
<dbReference type="EMBL" id="CP001177">
    <property type="protein sequence ID" value="ACJ79610.1"/>
    <property type="molecule type" value="Genomic_DNA"/>
</dbReference>
<dbReference type="SMR" id="B7HXM4"/>
<dbReference type="KEGG" id="bcr:BCAH187_A1043"/>
<dbReference type="HOGENOM" id="CLU_140243_3_0_9"/>
<dbReference type="Proteomes" id="UP000002214">
    <property type="component" value="Chromosome"/>
</dbReference>
<dbReference type="Gene3D" id="1.20.1500.10">
    <property type="entry name" value="YheA/YmcA-like"/>
    <property type="match status" value="1"/>
</dbReference>
<dbReference type="HAMAP" id="MF_01526">
    <property type="entry name" value="UPF0342"/>
    <property type="match status" value="1"/>
</dbReference>
<dbReference type="InterPro" id="IPR010368">
    <property type="entry name" value="Com_YlbF"/>
</dbReference>
<dbReference type="InterPro" id="IPR023378">
    <property type="entry name" value="YheA/YmcA-like_dom_sf"/>
</dbReference>
<dbReference type="NCBIfam" id="NF010211">
    <property type="entry name" value="PRK13676.1-4"/>
    <property type="match status" value="1"/>
</dbReference>
<dbReference type="Pfam" id="PF06133">
    <property type="entry name" value="Com_YlbF"/>
    <property type="match status" value="1"/>
</dbReference>
<dbReference type="SUPFAM" id="SSF158622">
    <property type="entry name" value="YheA/YmcA-like"/>
    <property type="match status" value="1"/>
</dbReference>
<proteinExistence type="inferred from homology"/>
<evidence type="ECO:0000255" key="1">
    <source>
        <dbReference type="HAMAP-Rule" id="MF_01526"/>
    </source>
</evidence>
<sequence>MTKNIHDVAYELQKAIAENDDFKTLKESYAAVQADAASKNLFDEFRTMQLSLQQKMMQGQEITEEDNQQAQEVVVRIQQDAKITKLMETEQRLNVVIGDVNKIIMKPLEELYSAQQQA</sequence>
<gene>
    <name type="ordered locus">BCAH187_A1043</name>
</gene>
<protein>
    <recommendedName>
        <fullName evidence="1">UPF0342 protein BCAH187_A1043</fullName>
    </recommendedName>
</protein>
<feature type="chain" id="PRO_1000198518" description="UPF0342 protein BCAH187_A1043">
    <location>
        <begin position="1"/>
        <end position="118"/>
    </location>
</feature>